<name>LPXC_BRUA2</name>
<reference key="1">
    <citation type="journal article" date="2005" name="Infect. Immun.">
        <title>Whole-genome analyses of speciation events in pathogenic Brucellae.</title>
        <authorList>
            <person name="Chain P.S."/>
            <person name="Comerci D.J."/>
            <person name="Tolmasky M.E."/>
            <person name="Larimer F.W."/>
            <person name="Malfatti S.A."/>
            <person name="Vergez L.M."/>
            <person name="Aguero F."/>
            <person name="Land M.L."/>
            <person name="Ugalde R.A."/>
            <person name="Garcia E."/>
        </authorList>
    </citation>
    <scope>NUCLEOTIDE SEQUENCE [LARGE SCALE GENOMIC DNA]</scope>
    <source>
        <strain>2308</strain>
    </source>
</reference>
<proteinExistence type="inferred from homology"/>
<accession>Q2YLZ2</accession>
<feature type="chain" id="PRO_1000122761" description="UDP-3-O-acyl-N-acetylglucosamine deacetylase">
    <location>
        <begin position="1"/>
        <end position="286"/>
    </location>
</feature>
<feature type="active site" description="Proton donor" evidence="1">
    <location>
        <position position="264"/>
    </location>
</feature>
<feature type="binding site" evidence="1">
    <location>
        <position position="79"/>
    </location>
    <ligand>
        <name>Zn(2+)</name>
        <dbReference type="ChEBI" id="CHEBI:29105"/>
    </ligand>
</feature>
<feature type="binding site" evidence="1">
    <location>
        <position position="237"/>
    </location>
    <ligand>
        <name>Zn(2+)</name>
        <dbReference type="ChEBI" id="CHEBI:29105"/>
    </ligand>
</feature>
<feature type="binding site" evidence="1">
    <location>
        <position position="241"/>
    </location>
    <ligand>
        <name>Zn(2+)</name>
        <dbReference type="ChEBI" id="CHEBI:29105"/>
    </ligand>
</feature>
<organism>
    <name type="scientific">Brucella abortus (strain 2308)</name>
    <dbReference type="NCBI Taxonomy" id="359391"/>
    <lineage>
        <taxon>Bacteria</taxon>
        <taxon>Pseudomonadati</taxon>
        <taxon>Pseudomonadota</taxon>
        <taxon>Alphaproteobacteria</taxon>
        <taxon>Hyphomicrobiales</taxon>
        <taxon>Brucellaceae</taxon>
        <taxon>Brucella/Ochrobactrum group</taxon>
        <taxon>Brucella</taxon>
    </lineage>
</organism>
<gene>
    <name evidence="1" type="primary">lpxC</name>
    <name type="ordered locus">BAB1_1443</name>
</gene>
<protein>
    <recommendedName>
        <fullName evidence="1">UDP-3-O-acyl-N-acetylglucosamine deacetylase</fullName>
        <shortName evidence="1">UDP-3-O-acyl-GlcNAc deacetylase</shortName>
        <ecNumber evidence="1">3.5.1.108</ecNumber>
    </recommendedName>
    <alternativeName>
        <fullName evidence="1">UDP-3-O-[R-3-hydroxymyristoyl]-N-acetylglucosamine deacetylase</fullName>
    </alternativeName>
</protein>
<evidence type="ECO:0000255" key="1">
    <source>
        <dbReference type="HAMAP-Rule" id="MF_00388"/>
    </source>
</evidence>
<dbReference type="EC" id="3.5.1.108" evidence="1"/>
<dbReference type="EMBL" id="AM040264">
    <property type="protein sequence ID" value="CAJ11399.1"/>
    <property type="molecule type" value="Genomic_DNA"/>
</dbReference>
<dbReference type="RefSeq" id="WP_002964532.1">
    <property type="nucleotide sequence ID" value="NZ_KN046823.1"/>
</dbReference>
<dbReference type="SMR" id="Q2YLZ2"/>
<dbReference type="STRING" id="359391.BAB1_1443"/>
<dbReference type="GeneID" id="97533370"/>
<dbReference type="KEGG" id="bmf:BAB1_1443"/>
<dbReference type="PATRIC" id="fig|359391.11.peg.893"/>
<dbReference type="HOGENOM" id="CLU_046528_1_1_5"/>
<dbReference type="PhylomeDB" id="Q2YLZ2"/>
<dbReference type="BioCyc" id="MetaCyc:BAB_RS22805-MONOMER"/>
<dbReference type="UniPathway" id="UPA00359">
    <property type="reaction ID" value="UER00478"/>
</dbReference>
<dbReference type="Proteomes" id="UP000002719">
    <property type="component" value="Chromosome I"/>
</dbReference>
<dbReference type="GO" id="GO:0016020">
    <property type="term" value="C:membrane"/>
    <property type="evidence" value="ECO:0007669"/>
    <property type="project" value="GOC"/>
</dbReference>
<dbReference type="GO" id="GO:0046872">
    <property type="term" value="F:metal ion binding"/>
    <property type="evidence" value="ECO:0007669"/>
    <property type="project" value="UniProtKB-KW"/>
</dbReference>
<dbReference type="GO" id="GO:0103117">
    <property type="term" value="F:UDP-3-O-acyl-N-acetylglucosamine deacetylase activity"/>
    <property type="evidence" value="ECO:0007669"/>
    <property type="project" value="UniProtKB-UniRule"/>
</dbReference>
<dbReference type="GO" id="GO:0009245">
    <property type="term" value="P:lipid A biosynthetic process"/>
    <property type="evidence" value="ECO:0007669"/>
    <property type="project" value="UniProtKB-UniRule"/>
</dbReference>
<dbReference type="Gene3D" id="3.30.230.20">
    <property type="entry name" value="lpxc deacetylase, domain 1"/>
    <property type="match status" value="1"/>
</dbReference>
<dbReference type="Gene3D" id="3.30.1700.10">
    <property type="entry name" value="lpxc deacetylase, domain 2"/>
    <property type="match status" value="1"/>
</dbReference>
<dbReference type="HAMAP" id="MF_00388">
    <property type="entry name" value="LpxC"/>
    <property type="match status" value="1"/>
</dbReference>
<dbReference type="InterPro" id="IPR020568">
    <property type="entry name" value="Ribosomal_Su5_D2-typ_SF"/>
</dbReference>
<dbReference type="InterPro" id="IPR004463">
    <property type="entry name" value="UDP-acyl_GlcNac_deAcase"/>
</dbReference>
<dbReference type="InterPro" id="IPR011334">
    <property type="entry name" value="UDP-acyl_GlcNac_deAcase_C"/>
</dbReference>
<dbReference type="InterPro" id="IPR015870">
    <property type="entry name" value="UDP-acyl_N-AcGlcN_deAcase_N"/>
</dbReference>
<dbReference type="NCBIfam" id="TIGR00325">
    <property type="entry name" value="lpxC"/>
    <property type="match status" value="1"/>
</dbReference>
<dbReference type="PANTHER" id="PTHR33694">
    <property type="entry name" value="UDP-3-O-ACYL-N-ACETYLGLUCOSAMINE DEACETYLASE 1, MITOCHONDRIAL-RELATED"/>
    <property type="match status" value="1"/>
</dbReference>
<dbReference type="PANTHER" id="PTHR33694:SF1">
    <property type="entry name" value="UDP-3-O-ACYL-N-ACETYLGLUCOSAMINE DEACETYLASE 1, MITOCHONDRIAL-RELATED"/>
    <property type="match status" value="1"/>
</dbReference>
<dbReference type="Pfam" id="PF03331">
    <property type="entry name" value="LpxC"/>
    <property type="match status" value="1"/>
</dbReference>
<dbReference type="SUPFAM" id="SSF54211">
    <property type="entry name" value="Ribosomal protein S5 domain 2-like"/>
    <property type="match status" value="2"/>
</dbReference>
<sequence length="286" mass="30853">MNAYQKTIGRAVTLSGVGVHGGAPASARLLPADADTGILFQRSDIKDSAPVCAHVSQIGATDLCTSLGAREARIDTVEHLMAAISALGIDNLVVEIEGPEVPILDGTSARFIEAVDSVGVVTQDAKRRFIRILKTVRVEAGNSWGEFRPYDGTRFEVEIDFECPLIGRQKFAHDVDEETFRKELSTARTFGFMKDVERLWAAGLALGASLDNSLVIGDDNSIVNADGLRFKDEFVRHKTLDAVGDLALAGLPFIGCFSSYRGGHRLNSEAVKALLSDETAFEIIEA</sequence>
<comment type="function">
    <text evidence="1">Catalyzes the hydrolysis of UDP-3-O-myristoyl-N-acetylglucosamine to form UDP-3-O-myristoylglucosamine and acetate, the committed step in lipid A biosynthesis.</text>
</comment>
<comment type="catalytic activity">
    <reaction evidence="1">
        <text>a UDP-3-O-[(3R)-3-hydroxyacyl]-N-acetyl-alpha-D-glucosamine + H2O = a UDP-3-O-[(3R)-3-hydroxyacyl]-alpha-D-glucosamine + acetate</text>
        <dbReference type="Rhea" id="RHEA:67816"/>
        <dbReference type="ChEBI" id="CHEBI:15377"/>
        <dbReference type="ChEBI" id="CHEBI:30089"/>
        <dbReference type="ChEBI" id="CHEBI:137740"/>
        <dbReference type="ChEBI" id="CHEBI:173225"/>
        <dbReference type="EC" id="3.5.1.108"/>
    </reaction>
</comment>
<comment type="cofactor">
    <cofactor evidence="1">
        <name>Zn(2+)</name>
        <dbReference type="ChEBI" id="CHEBI:29105"/>
    </cofactor>
</comment>
<comment type="pathway">
    <text evidence="1">Glycolipid biosynthesis; lipid IV(A) biosynthesis; lipid IV(A) from (3R)-3-hydroxytetradecanoyl-[acyl-carrier-protein] and UDP-N-acetyl-alpha-D-glucosamine: step 2/6.</text>
</comment>
<comment type="similarity">
    <text evidence="1">Belongs to the LpxC family.</text>
</comment>
<keyword id="KW-0378">Hydrolase</keyword>
<keyword id="KW-0441">Lipid A biosynthesis</keyword>
<keyword id="KW-0444">Lipid biosynthesis</keyword>
<keyword id="KW-0443">Lipid metabolism</keyword>
<keyword id="KW-0479">Metal-binding</keyword>
<keyword id="KW-1185">Reference proteome</keyword>
<keyword id="KW-0862">Zinc</keyword>